<name>KR109_HUMAN</name>
<feature type="chain" id="PRO_0000185217" description="Keratin-associated protein 10-9">
    <location>
        <begin position="1"/>
        <end position="292"/>
    </location>
</feature>
<feature type="repeat" description="1">
    <location>
        <begin position="26"/>
        <end position="30"/>
    </location>
</feature>
<feature type="repeat" description="2">
    <location>
        <begin position="31"/>
        <end position="35"/>
    </location>
</feature>
<feature type="repeat" description="3">
    <location>
        <begin position="36"/>
        <end position="40"/>
    </location>
</feature>
<feature type="repeat" description="4">
    <location>
        <begin position="57"/>
        <end position="61"/>
    </location>
</feature>
<feature type="repeat" description="5">
    <location>
        <begin position="79"/>
        <end position="83"/>
    </location>
</feature>
<feature type="repeat" description="6">
    <location>
        <begin position="99"/>
        <end position="103"/>
    </location>
</feature>
<feature type="repeat" description="7">
    <location>
        <begin position="104"/>
        <end position="108"/>
    </location>
</feature>
<feature type="repeat" description="8">
    <location>
        <begin position="109"/>
        <end position="113"/>
    </location>
</feature>
<feature type="repeat" description="9">
    <location>
        <begin position="114"/>
        <end position="118"/>
    </location>
</feature>
<feature type="repeat" description="10">
    <location>
        <begin position="120"/>
        <end position="124"/>
    </location>
</feature>
<feature type="repeat" description="11">
    <location>
        <begin position="130"/>
        <end position="134"/>
    </location>
</feature>
<feature type="repeat" description="12">
    <location>
        <begin position="140"/>
        <end position="144"/>
    </location>
</feature>
<feature type="repeat" description="13">
    <location>
        <begin position="145"/>
        <end position="149"/>
    </location>
</feature>
<feature type="repeat" description="14">
    <location>
        <begin position="150"/>
        <end position="154"/>
    </location>
</feature>
<feature type="repeat" description="15">
    <location>
        <begin position="162"/>
        <end position="166"/>
    </location>
</feature>
<feature type="repeat" description="16">
    <location>
        <begin position="172"/>
        <end position="176"/>
    </location>
</feature>
<feature type="repeat" description="17">
    <location>
        <begin position="182"/>
        <end position="186"/>
    </location>
</feature>
<feature type="repeat" description="18">
    <location>
        <begin position="187"/>
        <end position="191"/>
    </location>
</feature>
<feature type="repeat" description="19">
    <location>
        <begin position="192"/>
        <end position="196"/>
    </location>
</feature>
<feature type="repeat" description="20">
    <location>
        <begin position="197"/>
        <end position="201"/>
    </location>
</feature>
<feature type="repeat" description="21">
    <location>
        <begin position="209"/>
        <end position="213"/>
    </location>
</feature>
<feature type="repeat" description="22">
    <location>
        <begin position="219"/>
        <end position="223"/>
    </location>
</feature>
<feature type="repeat" description="23">
    <location>
        <begin position="224"/>
        <end position="228"/>
    </location>
</feature>
<feature type="repeat" description="24">
    <location>
        <begin position="243"/>
        <end position="247"/>
    </location>
</feature>
<feature type="repeat" description="25">
    <location>
        <begin position="250"/>
        <end position="254"/>
    </location>
</feature>
<feature type="region of interest" description="25 X 5 AA repeats of C-C-X(3)">
    <location>
        <begin position="26"/>
        <end position="254"/>
    </location>
</feature>
<feature type="sequence variant" id="VAR_017739" description="In dbSNP:rs8127342." evidence="3">
    <original>Y</original>
    <variation>C</variation>
    <location>
        <position position="182"/>
    </location>
</feature>
<feature type="sequence variant" id="VAR_060052" description="In dbSNP:rs9980129." evidence="1 3">
    <original>R</original>
    <variation>C</variation>
    <location>
        <position position="257"/>
    </location>
</feature>
<feature type="sequence conflict" description="In Ref. 3; EAX09409." evidence="4" ref="3">
    <original>P</original>
    <variation>PVCCKT</variation>
    <location>
        <position position="102"/>
    </location>
</feature>
<protein>
    <recommendedName>
        <fullName>Keratin-associated protein 10-9</fullName>
    </recommendedName>
    <alternativeName>
        <fullName>High sulfur keratin-associated protein 10.9</fullName>
    </alternativeName>
    <alternativeName>
        <fullName>Keratin-associated protein 10.9</fullName>
    </alternativeName>
    <alternativeName>
        <fullName>Keratin-associated protein 18-9</fullName>
    </alternativeName>
    <alternativeName>
        <fullName>Keratin-associated protein 18.9</fullName>
    </alternativeName>
</protein>
<reference key="1">
    <citation type="journal article" date="2004" name="Genomics">
        <title>A cluster of 21 keratin-associated protein genes within introns of another gene on human chromosome 21q22.3.</title>
        <authorList>
            <person name="Shibuya K."/>
            <person name="Obayashi I."/>
            <person name="Asakawa S."/>
            <person name="Minoshima S."/>
            <person name="Kudoh J."/>
            <person name="Shimizu N."/>
        </authorList>
    </citation>
    <scope>NUCLEOTIDE SEQUENCE [MRNA]</scope>
    <scope>TISSUE SPECIFICITY</scope>
    <source>
        <tissue>Hair root</tissue>
    </source>
</reference>
<reference key="2">
    <citation type="journal article" date="2000" name="Nature">
        <title>The DNA sequence of human chromosome 21.</title>
        <authorList>
            <person name="Hattori M."/>
            <person name="Fujiyama A."/>
            <person name="Taylor T.D."/>
            <person name="Watanabe H."/>
            <person name="Yada T."/>
            <person name="Park H.-S."/>
            <person name="Toyoda A."/>
            <person name="Ishii K."/>
            <person name="Totoki Y."/>
            <person name="Choi D.-K."/>
            <person name="Groner Y."/>
            <person name="Soeda E."/>
            <person name="Ohki M."/>
            <person name="Takagi T."/>
            <person name="Sakaki Y."/>
            <person name="Taudien S."/>
            <person name="Blechschmidt K."/>
            <person name="Polley A."/>
            <person name="Menzel U."/>
            <person name="Delabar J."/>
            <person name="Kumpf K."/>
            <person name="Lehmann R."/>
            <person name="Patterson D."/>
            <person name="Reichwald K."/>
            <person name="Rump A."/>
            <person name="Schillhabel M."/>
            <person name="Schudy A."/>
            <person name="Zimmermann W."/>
            <person name="Rosenthal A."/>
            <person name="Kudoh J."/>
            <person name="Shibuya K."/>
            <person name="Kawasaki K."/>
            <person name="Asakawa S."/>
            <person name="Shintani A."/>
            <person name="Sasaki T."/>
            <person name="Nagamine K."/>
            <person name="Mitsuyama S."/>
            <person name="Antonarakis S.E."/>
            <person name="Minoshima S."/>
            <person name="Shimizu N."/>
            <person name="Nordsiek G."/>
            <person name="Hornischer K."/>
            <person name="Brandt P."/>
            <person name="Scharfe M."/>
            <person name="Schoen O."/>
            <person name="Desario A."/>
            <person name="Reichelt J."/>
            <person name="Kauer G."/>
            <person name="Bloecker H."/>
            <person name="Ramser J."/>
            <person name="Beck A."/>
            <person name="Klages S."/>
            <person name="Hennig S."/>
            <person name="Riesselmann L."/>
            <person name="Dagand E."/>
            <person name="Wehrmeyer S."/>
            <person name="Borzym K."/>
            <person name="Gardiner K."/>
            <person name="Nizetic D."/>
            <person name="Francis F."/>
            <person name="Lehrach H."/>
            <person name="Reinhardt R."/>
            <person name="Yaspo M.-L."/>
        </authorList>
    </citation>
    <scope>NUCLEOTIDE SEQUENCE [LARGE SCALE GENOMIC DNA]</scope>
</reference>
<reference key="3">
    <citation type="submission" date="2005-09" db="EMBL/GenBank/DDBJ databases">
        <authorList>
            <person name="Mural R.J."/>
            <person name="Istrail S."/>
            <person name="Sutton G.G."/>
            <person name="Florea L."/>
            <person name="Halpern A.L."/>
            <person name="Mobarry C.M."/>
            <person name="Lippert R."/>
            <person name="Walenz B."/>
            <person name="Shatkay H."/>
            <person name="Dew I."/>
            <person name="Miller J.R."/>
            <person name="Flanigan M.J."/>
            <person name="Edwards N.J."/>
            <person name="Bolanos R."/>
            <person name="Fasulo D."/>
            <person name="Halldorsson B.V."/>
            <person name="Hannenhalli S."/>
            <person name="Turner R."/>
            <person name="Yooseph S."/>
            <person name="Lu F."/>
            <person name="Nusskern D.R."/>
            <person name="Shue B.C."/>
            <person name="Zheng X.H."/>
            <person name="Zhong F."/>
            <person name="Delcher A.L."/>
            <person name="Huson D.H."/>
            <person name="Kravitz S.A."/>
            <person name="Mouchard L."/>
            <person name="Reinert K."/>
            <person name="Remington K.A."/>
            <person name="Clark A.G."/>
            <person name="Waterman M.S."/>
            <person name="Eichler E.E."/>
            <person name="Adams M.D."/>
            <person name="Hunkapiller M.W."/>
            <person name="Myers E.W."/>
            <person name="Venter J.C."/>
        </authorList>
    </citation>
    <scope>NUCLEOTIDE SEQUENCE [LARGE SCALE GENOMIC DNA]</scope>
</reference>
<reference key="4">
    <citation type="journal article" date="2004" name="Genome Res.">
        <title>The status, quality, and expansion of the NIH full-length cDNA project: the Mammalian Gene Collection (MGC).</title>
        <authorList>
            <consortium name="The MGC Project Team"/>
        </authorList>
    </citation>
    <scope>NUCLEOTIDE SEQUENCE [LARGE SCALE MRNA]</scope>
    <scope>VARIANTS CYS-182 AND CYS-257</scope>
</reference>
<reference key="5">
    <citation type="journal article" date="2004" name="J. Invest. Dermatol.">
        <title>Hair keratin associated proteins: characterization of a second high sulfur KAP gene domain on human chromosome 21.</title>
        <authorList>
            <person name="Rogers M.A."/>
            <person name="Langbein L."/>
            <person name="Winter H."/>
            <person name="Beckmann I."/>
            <person name="Praetzel S."/>
            <person name="Schweizer J."/>
        </authorList>
    </citation>
    <scope>NUCLEOTIDE SEQUENCE [MRNA] OF 244-292</scope>
    <scope>TISSUE SPECIFICITY</scope>
    <scope>VARIANT CYS-257</scope>
    <source>
        <tissue>Scalp</tissue>
    </source>
</reference>
<sequence>MAASTMSIRSSAYSDSWQVDDCPESCCEPPCCATSCCAPAPCLTLVCTPVSRVSSPCCQVTCEPSPCQSGCTSSCTPSCCQQSSCQPAYCTSSPCQQACCVPVCCKPVCCVPVCCGASSCCQQSSYQPACCASSSCQPACCVPVCCKPVCCAPTCSEDSYSCCQQSSCQPACCTSSPCQQSYCVPVCCKPVCCKPICCVPVCSGASSLCCQQSGCQPACCTTSCCRPSSSVSLLCRPVCRPACCVPVSSCCAPTSSRQPSYCRQASCVSLLCRPVCSRPACYSFSSGQKSSC</sequence>
<comment type="function">
    <text>In the hair cortex, hair keratin intermediate filaments are embedded in an interfilamentous matrix, consisting of hair keratin-associated proteins (KRTAP), which are essential for the formation of a rigid and resistant hair shaft through their extensive disulfide bond cross-linking with abundant cysteine residues of hair keratins. The matrix proteins include the high-sulfur and high-glycine-tyrosine keratins.</text>
</comment>
<comment type="subunit">
    <text>Interacts with hair keratins.</text>
</comment>
<comment type="interaction">
    <interactant intactId="EBI-10172052">
        <id>P60411</id>
    </interactant>
    <interactant intactId="EBI-10173507">
        <id>Q6UY14-3</id>
        <label>ADAMTSL4</label>
    </interactant>
    <organismsDiffer>false</organismsDiffer>
    <experiments>8</experiments>
</comment>
<comment type="interaction">
    <interactant intactId="EBI-10172052">
        <id>P60411</id>
    </interactant>
    <interactant intactId="EBI-2558314">
        <id>P43353</id>
        <label>ALDH3B1</label>
    </interactant>
    <organismsDiffer>false</organismsDiffer>
    <experiments>3</experiments>
</comment>
<comment type="interaction">
    <interactant intactId="EBI-10172052">
        <id>P60411</id>
    </interactant>
    <interactant intactId="EBI-1052631">
        <id>P09923</id>
        <label>ALPI</label>
    </interactant>
    <organismsDiffer>false</organismsDiffer>
    <experiments>3</experiments>
</comment>
<comment type="interaction">
    <interactant intactId="EBI-10172052">
        <id>P60411</id>
    </interactant>
    <interactant intactId="EBI-11954519">
        <id>Q49AR9</id>
        <label>ANKS1A</label>
    </interactant>
    <organismsDiffer>false</organismsDiffer>
    <experiments>3</experiments>
</comment>
<comment type="interaction">
    <interactant intactId="EBI-10172052">
        <id>P60411</id>
    </interactant>
    <interactant intactId="EBI-716933">
        <id>Q8N6T3</id>
        <label>ARFGAP1</label>
    </interactant>
    <organismsDiffer>false</organismsDiffer>
    <experiments>3</experiments>
</comment>
<comment type="interaction">
    <interactant intactId="EBI-10172052">
        <id>P60411</id>
    </interactant>
    <interactant intactId="EBI-310660">
        <id>Q9ULK2</id>
        <label>ATXN7L1</label>
    </interactant>
    <organismsDiffer>false</organismsDiffer>
    <experiments>3</experiments>
</comment>
<comment type="interaction">
    <interactant intactId="EBI-10172052">
        <id>P60411</id>
    </interactant>
    <interactant intactId="EBI-8640233">
        <id>Q5T686</id>
        <label>AVPI1</label>
    </interactant>
    <organismsDiffer>false</organismsDiffer>
    <experiments>3</experiments>
</comment>
<comment type="interaction">
    <interactant intactId="EBI-10172052">
        <id>P60411</id>
    </interactant>
    <interactant intactId="EBI-10174813">
        <id>A8KA13</id>
        <label>BCL6B</label>
    </interactant>
    <organismsDiffer>false</organismsDiffer>
    <experiments>3</experiments>
</comment>
<comment type="interaction">
    <interactant intactId="EBI-10172052">
        <id>P60411</id>
    </interactant>
    <interactant intactId="EBI-1035195">
        <id>P18075</id>
        <label>BMP7</label>
    </interactant>
    <organismsDiffer>false</organismsDiffer>
    <experiments>3</experiments>
</comment>
<comment type="interaction">
    <interactant intactId="EBI-10172052">
        <id>P60411</id>
    </interactant>
    <interactant intactId="EBI-741210">
        <id>Q0VDD7</id>
        <label>BRME1</label>
    </interactant>
    <organismsDiffer>false</organismsDiffer>
    <experiments>4</experiments>
</comment>
<comment type="interaction">
    <interactant intactId="EBI-10172052">
        <id>P60411</id>
    </interactant>
    <interactant intactId="EBI-744052">
        <id>Q5T681</id>
        <label>C10orf62</label>
    </interactant>
    <organismsDiffer>false</organismsDiffer>
    <experiments>3</experiments>
</comment>
<comment type="interaction">
    <interactant intactId="EBI-10172052">
        <id>P60411</id>
    </interactant>
    <interactant intactId="EBI-6660291">
        <id>Q6NUJ2</id>
        <label>C11orf87</label>
    </interactant>
    <organismsDiffer>false</organismsDiffer>
    <experiments>3</experiments>
</comment>
<comment type="interaction">
    <interactant intactId="EBI-10172052">
        <id>P60411</id>
    </interactant>
    <interactant intactId="EBI-7317823">
        <id>Q6P5X5</id>
        <label>C22orf39</label>
    </interactant>
    <organismsDiffer>false</organismsDiffer>
    <experiments>3</experiments>
</comment>
<comment type="interaction">
    <interactant intactId="EBI-10172052">
        <id>P60411</id>
    </interactant>
    <interactant intactId="EBI-10173955">
        <id>A6NFR6-4</id>
        <label>C5orf60</label>
    </interactant>
    <organismsDiffer>false</organismsDiffer>
    <experiments>3</experiments>
</comment>
<comment type="interaction">
    <interactant intactId="EBI-10172052">
        <id>P60411</id>
    </interactant>
    <interactant intactId="EBI-10258233">
        <id>Q7Z7H3</id>
        <label>CATIP</label>
    </interactant>
    <organismsDiffer>false</organismsDiffer>
    <experiments>3</experiments>
</comment>
<comment type="interaction">
    <interactant intactId="EBI-10172052">
        <id>P60411</id>
    </interactant>
    <interactant intactId="EBI-744545">
        <id>Q8NEC5</id>
        <label>CATSPER1</label>
    </interactant>
    <organismsDiffer>false</organismsDiffer>
    <experiments>11</experiments>
</comment>
<comment type="interaction">
    <interactant intactId="EBI-10172052">
        <id>P60411</id>
    </interactant>
    <interactant intactId="EBI-745934">
        <id>Q14781</id>
        <label>CBX2</label>
    </interactant>
    <organismsDiffer>false</organismsDiffer>
    <experiments>3</experiments>
</comment>
<comment type="interaction">
    <interactant intactId="EBI-10172052">
        <id>P60411</id>
    </interactant>
    <interactant intactId="EBI-10254587">
        <id>Q6UXG3</id>
        <label>CD300LG</label>
    </interactant>
    <organismsDiffer>false</organismsDiffer>
    <experiments>3</experiments>
</comment>
<comment type="interaction">
    <interactant intactId="EBI-10172052">
        <id>P60411</id>
    </interactant>
    <interactant intactId="EBI-3919850">
        <id>Q8IVW4</id>
        <label>CDKL3</label>
    </interactant>
    <organismsDiffer>false</organismsDiffer>
    <experiments>3</experiments>
</comment>
<comment type="interaction">
    <interactant intactId="EBI-10172052">
        <id>P60411</id>
    </interactant>
    <interactant intactId="EBI-741528">
        <id>Q9UKJ5</id>
        <label>CHIC2</label>
    </interactant>
    <organismsDiffer>false</organismsDiffer>
    <experiments>3</experiments>
</comment>
<comment type="interaction">
    <interactant intactId="EBI-10172052">
        <id>P60411</id>
    </interactant>
    <interactant intactId="EBI-947551">
        <id>Q9H2X0</id>
        <label>CHRD</label>
    </interactant>
    <organismsDiffer>false</organismsDiffer>
    <experiments>3</experiments>
</comment>
<comment type="interaction">
    <interactant intactId="EBI-10172052">
        <id>P60411</id>
    </interactant>
    <interactant intactId="EBI-9008836">
        <id>P07510</id>
        <label>CHRNG</label>
    </interactant>
    <organismsDiffer>false</organismsDiffer>
    <experiments>4</experiments>
</comment>
<comment type="interaction">
    <interactant intactId="EBI-10172052">
        <id>P60411</id>
    </interactant>
    <interactant intactId="EBI-11979451">
        <id>P07510-2</id>
        <label>CHRNG</label>
    </interactant>
    <organismsDiffer>false</organismsDiffer>
    <experiments>6</experiments>
</comment>
<comment type="interaction">
    <interactant intactId="EBI-10172052">
        <id>P60411</id>
    </interactant>
    <interactant intactId="EBI-456371">
        <id>P61024</id>
        <label>CKS1B</label>
    </interactant>
    <organismsDiffer>false</organismsDiffer>
    <experiments>3</experiments>
</comment>
<comment type="interaction">
    <interactant intactId="EBI-10172052">
        <id>P60411</id>
    </interactant>
    <interactant intactId="EBI-633400">
        <id>Q9HAZ1</id>
        <label>CLK4</label>
    </interactant>
    <organismsDiffer>false</organismsDiffer>
    <experiments>3</experiments>
</comment>
<comment type="interaction">
    <interactant intactId="EBI-10172052">
        <id>P60411</id>
    </interactant>
    <interactant intactId="EBI-741032">
        <id>Q8NE01</id>
        <label>CNNM3</label>
    </interactant>
    <organismsDiffer>false</organismsDiffer>
    <experiments>6</experiments>
</comment>
<comment type="interaction">
    <interactant intactId="EBI-10172052">
        <id>P60411</id>
    </interactant>
    <interactant intactId="EBI-10269984">
        <id>Q8NE01-3</id>
        <label>CNNM3</label>
    </interactant>
    <organismsDiffer>false</organismsDiffer>
    <experiments>3</experiments>
</comment>
<comment type="interaction">
    <interactant intactId="EBI-10172052">
        <id>P60411</id>
    </interactant>
    <interactant intactId="EBI-713677">
        <id>Q9UGL9</id>
        <label>CRCT1</label>
    </interactant>
    <organismsDiffer>false</organismsDiffer>
    <experiments>8</experiments>
</comment>
<comment type="interaction">
    <interactant intactId="EBI-10172052">
        <id>P60411</id>
    </interactant>
    <interactant intactId="EBI-10192698">
        <id>Q02930-3</id>
        <label>CREB5</label>
    </interactant>
    <organismsDiffer>false</organismsDiffer>
    <experiments>8</experiments>
</comment>
<comment type="interaction">
    <interactant intactId="EBI-10172052">
        <id>P60411</id>
    </interactant>
    <interactant intactId="EBI-3923092">
        <id>Q9H4G1</id>
        <label>CST9L</label>
    </interactant>
    <organismsDiffer>false</organismsDiffer>
    <experiments>3</experiments>
</comment>
<comment type="interaction">
    <interactant intactId="EBI-10172052">
        <id>P60411</id>
    </interactant>
    <interactant intactId="EBI-3867333">
        <id>A8MQ03</id>
        <label>CYSRT1</label>
    </interactant>
    <organismsDiffer>false</organismsDiffer>
    <experiments>3</experiments>
</comment>
<comment type="interaction">
    <interactant intactId="EBI-10172052">
        <id>P60411</id>
    </interactant>
    <interactant intactId="EBI-746300">
        <id>Q96LJ7</id>
        <label>DHRS1</label>
    </interactant>
    <organismsDiffer>false</organismsDiffer>
    <experiments>3</experiments>
</comment>
<comment type="interaction">
    <interactant intactId="EBI-10172052">
        <id>P60411</id>
    </interactant>
    <interactant intactId="EBI-1051531">
        <id>Q6P158</id>
        <label>DHX57</label>
    </interactant>
    <organismsDiffer>false</organismsDiffer>
    <experiments>6</experiments>
</comment>
<comment type="interaction">
    <interactant intactId="EBI-10172052">
        <id>P60411</id>
    </interactant>
    <interactant intactId="EBI-9679045">
        <id>Q9NQL9</id>
        <label>DMRT3</label>
    </interactant>
    <organismsDiffer>false</organismsDiffer>
    <experiments>6</experiments>
</comment>
<comment type="interaction">
    <interactant intactId="EBI-10172052">
        <id>P60411</id>
    </interactant>
    <interactant intactId="EBI-448771">
        <id>Q92608</id>
        <label>DOCK2</label>
    </interactant>
    <organismsDiffer>false</organismsDiffer>
    <experiments>3</experiments>
</comment>
<comment type="interaction">
    <interactant intactId="EBI-10172052">
        <id>P60411</id>
    </interactant>
    <interactant intactId="EBI-398610">
        <id>O60573</id>
        <label>EIF4E2</label>
    </interactant>
    <organismsDiffer>false</organismsDiffer>
    <experiments>3</experiments>
</comment>
<comment type="interaction">
    <interactant intactId="EBI-10172052">
        <id>P60411</id>
    </interactant>
    <interactant intactId="EBI-10699473">
        <id>Q15910-2</id>
        <label>EZH2</label>
    </interactant>
    <organismsDiffer>false</organismsDiffer>
    <experiments>3</experiments>
</comment>
<comment type="interaction">
    <interactant intactId="EBI-10172052">
        <id>P60411</id>
    </interactant>
    <interactant intactId="EBI-741626">
        <id>Q9H5Z6</id>
        <label>FAM124B</label>
    </interactant>
    <organismsDiffer>false</organismsDiffer>
    <experiments>3</experiments>
</comment>
<comment type="interaction">
    <interactant intactId="EBI-10172052">
        <id>P60411</id>
    </interactant>
    <interactant intactId="EBI-719941">
        <id>Q3B820</id>
        <label>FAM161A</label>
    </interactant>
    <organismsDiffer>false</organismsDiffer>
    <experiments>3</experiments>
</comment>
<comment type="interaction">
    <interactant intactId="EBI-10172052">
        <id>P60411</id>
    </interactant>
    <interactant intactId="EBI-751192">
        <id>Q5HYJ3</id>
        <label>FAM76B</label>
    </interactant>
    <organismsDiffer>false</organismsDiffer>
    <experiments>3</experiments>
</comment>
<comment type="interaction">
    <interactant intactId="EBI-10172052">
        <id>P60411</id>
    </interactant>
    <interactant intactId="EBI-11956087">
        <id>Q5HYJ3-3</id>
        <label>FAM76B</label>
    </interactant>
    <organismsDiffer>false</organismsDiffer>
    <experiments>3</experiments>
</comment>
<comment type="interaction">
    <interactant intactId="EBI-10172052">
        <id>P60411</id>
    </interactant>
    <interactant intactId="EBI-2513774">
        <id>O95363</id>
        <label>FARS2</label>
    </interactant>
    <organismsDiffer>false</organismsDiffer>
    <experiments>6</experiments>
</comment>
<comment type="interaction">
    <interactant intactId="EBI-10172052">
        <id>P60411</id>
    </interactant>
    <interactant intactId="EBI-741068">
        <id>Q969U6</id>
        <label>FBXW5</label>
    </interactant>
    <organismsDiffer>false</organismsDiffer>
    <experiments>3</experiments>
</comment>
<comment type="interaction">
    <interactant intactId="EBI-10172052">
        <id>P60411</id>
    </interactant>
    <interactant intactId="EBI-746969">
        <id>Q9H0R8</id>
        <label>GABARAPL1</label>
    </interactant>
    <organismsDiffer>false</organismsDiffer>
    <experiments>3</experiments>
</comment>
<comment type="interaction">
    <interactant intactId="EBI-10172052">
        <id>P60411</id>
    </interactant>
    <interactant intactId="EBI-720116">
        <id>P60520</id>
        <label>GABARAPL2</label>
    </interactant>
    <organismsDiffer>false</organismsDiffer>
    <experiments>3</experiments>
</comment>
<comment type="interaction">
    <interactant intactId="EBI-10172052">
        <id>P60411</id>
    </interactant>
    <interactant intactId="EBI-2806671">
        <id>P23769</id>
        <label>GATA2</label>
    </interactant>
    <organismsDiffer>false</organismsDiffer>
    <experiments>3</experiments>
</comment>
<comment type="interaction">
    <interactant intactId="EBI-10172052">
        <id>P60411</id>
    </interactant>
    <interactant intactId="EBI-7466542">
        <id>P43220</id>
        <label>GLP1R</label>
    </interactant>
    <organismsDiffer>false</organismsDiffer>
    <experiments>3</experiments>
</comment>
<comment type="interaction">
    <interactant intactId="EBI-10172052">
        <id>P60411</id>
    </interactant>
    <interactant intactId="EBI-374781">
        <id>O76003</id>
        <label>GLRX3</label>
    </interactant>
    <organismsDiffer>false</organismsDiffer>
    <experiments>8</experiments>
</comment>
<comment type="interaction">
    <interactant intactId="EBI-10172052">
        <id>P60411</id>
    </interactant>
    <interactant intactId="EBI-4291090">
        <id>Q9Y223</id>
        <label>GNE</label>
    </interactant>
    <organismsDiffer>false</organismsDiffer>
    <experiments>3</experiments>
</comment>
<comment type="interaction">
    <interactant intactId="EBI-10172052">
        <id>P60411</id>
    </interactant>
    <interactant intactId="EBI-5666657">
        <id>Q9NWQ4</id>
        <label>GPATCH2L</label>
    </interactant>
    <organismsDiffer>false</organismsDiffer>
    <experiments>3</experiments>
</comment>
<comment type="interaction">
    <interactant intactId="EBI-10172052">
        <id>P60411</id>
    </interactant>
    <interactant intactId="EBI-353467">
        <id>P09211</id>
        <label>GSTP1</label>
    </interactant>
    <organismsDiffer>false</organismsDiffer>
    <experiments>3</experiments>
</comment>
<comment type="interaction">
    <interactant intactId="EBI-10172052">
        <id>P60411</id>
    </interactant>
    <interactant intactId="EBI-11978177">
        <id>Q96NT3-2</id>
        <label>GUCD1</label>
    </interactant>
    <organismsDiffer>false</organismsDiffer>
    <experiments>3</experiments>
</comment>
<comment type="interaction">
    <interactant intactId="EBI-10172052">
        <id>P60411</id>
    </interactant>
    <interactant intactId="EBI-10176884">
        <id>D9YZU9</id>
        <label>HBG2</label>
    </interactant>
    <organismsDiffer>false</organismsDiffer>
    <experiments>3</experiments>
</comment>
<comment type="interaction">
    <interactant intactId="EBI-10172052">
        <id>P60411</id>
    </interactant>
    <interactant intactId="EBI-719843">
        <id>P02008</id>
        <label>HBZ</label>
    </interactant>
    <organismsDiffer>false</organismsDiffer>
    <experiments>3</experiments>
</comment>
<comment type="interaction">
    <interactant intactId="EBI-10172052">
        <id>P60411</id>
    </interactant>
    <interactant intactId="EBI-346340">
        <id>P08631</id>
        <label>HCK</label>
    </interactant>
    <organismsDiffer>false</organismsDiffer>
    <experiments>3</experiments>
</comment>
<comment type="interaction">
    <interactant intactId="EBI-10172052">
        <id>P60411</id>
    </interactant>
    <interactant intactId="EBI-9834454">
        <id>P08631-2</id>
        <label>HCK</label>
    </interactant>
    <organismsDiffer>false</organismsDiffer>
    <experiments>3</experiments>
</comment>
<comment type="interaction">
    <interactant intactId="EBI-10172052">
        <id>P60411</id>
    </interactant>
    <interactant intactId="EBI-7469266">
        <id>Q96HZ4</id>
        <label>HES6</label>
    </interactant>
    <organismsDiffer>false</organismsDiffer>
    <experiments>3</experiments>
</comment>
<comment type="interaction">
    <interactant intactId="EBI-10172052">
        <id>P60411</id>
    </interactant>
    <interactant intactId="EBI-740785">
        <id>P49639</id>
        <label>HOXA1</label>
    </interactant>
    <organismsDiffer>false</organismsDiffer>
    <experiments>8</experiments>
</comment>
<comment type="interaction">
    <interactant intactId="EBI-10172052">
        <id>P60411</id>
    </interactant>
    <interactant intactId="EBI-745290">
        <id>P17482</id>
        <label>HOXB9</label>
    </interactant>
    <organismsDiffer>false</organismsDiffer>
    <experiments>3</experiments>
</comment>
<comment type="interaction">
    <interactant intactId="EBI-10172052">
        <id>P60411</id>
    </interactant>
    <interactant intactId="EBI-1752118">
        <id>P31273</id>
        <label>HOXC8</label>
    </interactant>
    <organismsDiffer>false</organismsDiffer>
    <experiments>3</experiments>
</comment>
<comment type="interaction">
    <interactant intactId="EBI-10172052">
        <id>P60411</id>
    </interactant>
    <interactant intactId="EBI-749311">
        <id>P37235</id>
        <label>HPCAL1</label>
    </interactant>
    <organismsDiffer>false</organismsDiffer>
    <experiments>6</experiments>
</comment>
<comment type="interaction">
    <interactant intactId="EBI-10172052">
        <id>P60411</id>
    </interactant>
    <interactant intactId="EBI-748664">
        <id>O75506</id>
        <label>HSBP1</label>
    </interactant>
    <organismsDiffer>false</organismsDiffer>
    <experiments>3</experiments>
</comment>
<comment type="interaction">
    <interactant intactId="EBI-10172052">
        <id>P60411</id>
    </interactant>
    <interactant intactId="EBI-3918847">
        <id>Q9H2F3</id>
        <label>HSD3B7</label>
    </interactant>
    <organismsDiffer>false</organismsDiffer>
    <experiments>3</experiments>
</comment>
<comment type="interaction">
    <interactant intactId="EBI-10172052">
        <id>P60411</id>
    </interactant>
    <interactant intactId="EBI-8293590">
        <id>Q969P0</id>
        <label>IGSF8</label>
    </interactant>
    <organismsDiffer>false</organismsDiffer>
    <experiments>3</experiments>
</comment>
<comment type="interaction">
    <interactant intactId="EBI-10172052">
        <id>P60411</id>
    </interactant>
    <interactant intactId="EBI-1380477">
        <id>Q92835</id>
        <label>INPP5D</label>
    </interactant>
    <organismsDiffer>false</organismsDiffer>
    <experiments>3</experiments>
</comment>
<comment type="interaction">
    <interactant intactId="EBI-10172052">
        <id>P60411</id>
    </interactant>
    <interactant intactId="EBI-10220600">
        <id>Q8NA54</id>
        <label>IQUB</label>
    </interactant>
    <organismsDiffer>false</organismsDiffer>
    <experiments>3</experiments>
</comment>
<comment type="interaction">
    <interactant intactId="EBI-10172052">
        <id>P60411</id>
    </interactant>
    <interactant intactId="EBI-11051601">
        <id>P16144-2</id>
        <label>ITGB4</label>
    </interactant>
    <organismsDiffer>false</organismsDiffer>
    <experiments>5</experiments>
</comment>
<comment type="interaction">
    <interactant intactId="EBI-10172052">
        <id>P60411</id>
    </interactant>
    <interactant intactId="EBI-10178729">
        <id>L7RT22</id>
        <label>ITGB5</label>
    </interactant>
    <organismsDiffer>false</organismsDiffer>
    <experiments>3</experiments>
</comment>
<comment type="interaction">
    <interactant intactId="EBI-10172052">
        <id>P60411</id>
    </interactant>
    <interactant intactId="EBI-1223434">
        <id>P18084</id>
        <label>ITGB5</label>
    </interactant>
    <organismsDiffer>false</organismsDiffer>
    <experiments>3</experiments>
</comment>
<comment type="interaction">
    <interactant intactId="EBI-10172052">
        <id>P60411</id>
    </interactant>
    <interactant intactId="EBI-399080">
        <id>Q92993</id>
        <label>KAT5</label>
    </interactant>
    <organismsDiffer>false</organismsDiffer>
    <experiments>3</experiments>
</comment>
<comment type="interaction">
    <interactant intactId="EBI-10172052">
        <id>P60411</id>
    </interactant>
    <interactant intactId="EBI-20764875">
        <id>A0A384DVV8</id>
        <label>KIAA0040</label>
    </interactant>
    <organismsDiffer>false</organismsDiffer>
    <experiments>3</experiments>
</comment>
<comment type="interaction">
    <interactant intactId="EBI-10172052">
        <id>P60411</id>
    </interactant>
    <interactant intactId="EBI-6426443">
        <id>Q2WGJ6</id>
        <label>KLHL38</label>
    </interactant>
    <organismsDiffer>false</organismsDiffer>
    <experiments>3</experiments>
</comment>
<comment type="interaction">
    <interactant intactId="EBI-10172052">
        <id>P60411</id>
    </interactant>
    <interactant intactId="EBI-742094">
        <id>P35900</id>
        <label>KRT20</label>
    </interactant>
    <organismsDiffer>false</organismsDiffer>
    <experiments>3</experiments>
</comment>
<comment type="interaction">
    <interactant intactId="EBI-10172052">
        <id>P60411</id>
    </interactant>
    <interactant intactId="EBI-10221390">
        <id>P78385</id>
        <label>KRT83</label>
    </interactant>
    <organismsDiffer>false</organismsDiffer>
    <experiments>3</experiments>
</comment>
<comment type="interaction">
    <interactant intactId="EBI-10172052">
        <id>P60411</id>
    </interactant>
    <interactant intactId="EBI-11959885">
        <id>Q07627</id>
        <label>KRTAP1-1</label>
    </interactant>
    <organismsDiffer>false</organismsDiffer>
    <experiments>3</experiments>
</comment>
<comment type="interaction">
    <interactant intactId="EBI-10172052">
        <id>P60411</id>
    </interactant>
    <interactant intactId="EBI-11749135">
        <id>Q8IUG1</id>
        <label>KRTAP1-3</label>
    </interactant>
    <organismsDiffer>false</organismsDiffer>
    <experiments>3</experiments>
</comment>
<comment type="interaction">
    <interactant intactId="EBI-10172052">
        <id>P60411</id>
    </interactant>
    <interactant intactId="EBI-10172290">
        <id>P60409</id>
        <label>KRTAP10-7</label>
    </interactant>
    <organismsDiffer>false</organismsDiffer>
    <experiments>6</experiments>
</comment>
<comment type="interaction">
    <interactant intactId="EBI-10172052">
        <id>P60411</id>
    </interactant>
    <interactant intactId="EBI-10171774">
        <id>P60410</id>
        <label>KRTAP10-8</label>
    </interactant>
    <organismsDiffer>false</organismsDiffer>
    <experiments>6</experiments>
</comment>
<comment type="interaction">
    <interactant intactId="EBI-10172052">
        <id>P60411</id>
    </interactant>
    <interactant intactId="EBI-10210845">
        <id>P59990</id>
        <label>KRTAP12-1</label>
    </interactant>
    <organismsDiffer>false</organismsDiffer>
    <experiments>6</experiments>
</comment>
<comment type="interaction">
    <interactant intactId="EBI-10172052">
        <id>P60411</id>
    </interactant>
    <interactant intactId="EBI-11953334">
        <id>P60328</id>
        <label>KRTAP12-3</label>
    </interactant>
    <organismsDiffer>false</organismsDiffer>
    <experiments>3</experiments>
</comment>
<comment type="interaction">
    <interactant intactId="EBI-10172052">
        <id>P60411</id>
    </interactant>
    <interactant intactId="EBI-3957672">
        <id>Q6PEX3</id>
        <label>KRTAP26-1</label>
    </interactant>
    <organismsDiffer>false</organismsDiffer>
    <experiments>3</experiments>
</comment>
<comment type="interaction">
    <interactant intactId="EBI-10172052">
        <id>P60411</id>
    </interactant>
    <interactant intactId="EBI-10302392">
        <id>Q9BYQ6</id>
        <label>KRTAP4-11</label>
    </interactant>
    <organismsDiffer>false</organismsDiffer>
    <experiments>6</experiments>
</comment>
<comment type="interaction">
    <interactant intactId="EBI-10172052">
        <id>P60411</id>
    </interactant>
    <interactant intactId="EBI-739863">
        <id>Q9BQ66</id>
        <label>KRTAP4-12</label>
    </interactant>
    <organismsDiffer>false</organismsDiffer>
    <experiments>6</experiments>
</comment>
<comment type="interaction">
    <interactant intactId="EBI-10172052">
        <id>P60411</id>
    </interactant>
    <interactant intactId="EBI-10172511">
        <id>Q9BYR5</id>
        <label>KRTAP4-2</label>
    </interactant>
    <organismsDiffer>false</organismsDiffer>
    <experiments>5</experiments>
</comment>
<comment type="interaction">
    <interactant intactId="EBI-10172052">
        <id>P60411</id>
    </interactant>
    <interactant intactId="EBI-11993296">
        <id>Q6L8G4</id>
        <label>KRTAP5-11</label>
    </interactant>
    <organismsDiffer>false</organismsDiffer>
    <experiments>3</experiments>
</comment>
<comment type="interaction">
    <interactant intactId="EBI-10172052">
        <id>P60411</id>
    </interactant>
    <interactant intactId="EBI-10250562">
        <id>Q6L8G9</id>
        <label>KRTAP5-6</label>
    </interactant>
    <organismsDiffer>false</organismsDiffer>
    <experiments>3</experiments>
</comment>
<comment type="interaction">
    <interactant intactId="EBI-10172052">
        <id>P60411</id>
    </interactant>
    <interactant intactId="EBI-3958099">
        <id>P26371</id>
        <label>KRTAP5-9</label>
    </interactant>
    <organismsDiffer>false</organismsDiffer>
    <experiments>6</experiments>
</comment>
<comment type="interaction">
    <interactant intactId="EBI-10172052">
        <id>P60411</id>
    </interactant>
    <interactant intactId="EBI-1044640">
        <id>Q9BYQ4</id>
        <label>KRTAP9-2</label>
    </interactant>
    <organismsDiffer>false</organismsDiffer>
    <experiments>9</experiments>
</comment>
<comment type="interaction">
    <interactant intactId="EBI-10172052">
        <id>P60411</id>
    </interactant>
    <interactant intactId="EBI-1043191">
        <id>Q9BYQ3</id>
        <label>KRTAP9-3</label>
    </interactant>
    <organismsDiffer>false</organismsDiffer>
    <experiments>6</experiments>
</comment>
<comment type="interaction">
    <interactant intactId="EBI-10172052">
        <id>P60411</id>
    </interactant>
    <interactant intactId="EBI-10185730">
        <id>Q9BYQ2</id>
        <label>KRTAP9-4</label>
    </interactant>
    <organismsDiffer>false</organismsDiffer>
    <experiments>3</experiments>
</comment>
<comment type="interaction">
    <interactant intactId="EBI-10172052">
        <id>P60411</id>
    </interactant>
    <interactant intactId="EBI-11962058">
        <id>Q5T7P2</id>
        <label>LCE1A</label>
    </interactant>
    <organismsDiffer>false</organismsDiffer>
    <experiments>3</experiments>
</comment>
<comment type="interaction">
    <interactant intactId="EBI-10172052">
        <id>P60411</id>
    </interactant>
    <interactant intactId="EBI-10245913">
        <id>Q5T7P3</id>
        <label>LCE1B</label>
    </interactant>
    <organismsDiffer>false</organismsDiffer>
    <experiments>12</experiments>
</comment>
<comment type="interaction">
    <interactant intactId="EBI-10172052">
        <id>P60411</id>
    </interactant>
    <interactant intactId="EBI-11741311">
        <id>Q5T752</id>
        <label>LCE1D</label>
    </interactant>
    <organismsDiffer>false</organismsDiffer>
    <experiments>5</experiments>
</comment>
<comment type="interaction">
    <interactant intactId="EBI-10172052">
        <id>P60411</id>
    </interactant>
    <interactant intactId="EBI-11955335">
        <id>Q5T753</id>
        <label>LCE1E</label>
    </interactant>
    <organismsDiffer>false</organismsDiffer>
    <experiments>3</experiments>
</comment>
<comment type="interaction">
    <interactant intactId="EBI-10172052">
        <id>P60411</id>
    </interactant>
    <interactant intactId="EBI-11958008">
        <id>Q5T754</id>
        <label>LCE1F</label>
    </interactant>
    <organismsDiffer>false</organismsDiffer>
    <experiments>5</experiments>
</comment>
<comment type="interaction">
    <interactant intactId="EBI-10172052">
        <id>P60411</id>
    </interactant>
    <interactant intactId="EBI-10246607">
        <id>Q5TA79</id>
        <label>LCE2A</label>
    </interactant>
    <organismsDiffer>false</organismsDiffer>
    <experiments>6</experiments>
</comment>
<comment type="interaction">
    <interactant intactId="EBI-10172052">
        <id>P60411</id>
    </interactant>
    <interactant intactId="EBI-11478468">
        <id>O14633</id>
        <label>LCE2B</label>
    </interactant>
    <organismsDiffer>false</organismsDiffer>
    <experiments>3</experiments>
</comment>
<comment type="interaction">
    <interactant intactId="EBI-10172052">
        <id>P60411</id>
    </interactant>
    <interactant intactId="EBI-11973993">
        <id>Q5TA81</id>
        <label>LCE2C</label>
    </interactant>
    <organismsDiffer>false</organismsDiffer>
    <experiments>5</experiments>
</comment>
<comment type="interaction">
    <interactant intactId="EBI-10172052">
        <id>P60411</id>
    </interactant>
    <interactant intactId="EBI-10246750">
        <id>Q5TA82</id>
        <label>LCE2D</label>
    </interactant>
    <organismsDiffer>false</organismsDiffer>
    <experiments>6</experiments>
</comment>
<comment type="interaction">
    <interactant intactId="EBI-10172052">
        <id>P60411</id>
    </interactant>
    <interactant intactId="EBI-9394625">
        <id>Q5TA76</id>
        <label>LCE3A</label>
    </interactant>
    <organismsDiffer>false</organismsDiffer>
    <experiments>5</experiments>
</comment>
<comment type="interaction">
    <interactant intactId="EBI-10172052">
        <id>P60411</id>
    </interactant>
    <interactant intactId="EBI-11974495">
        <id>Q5TA77</id>
        <label>LCE3B</label>
    </interactant>
    <organismsDiffer>false</organismsDiffer>
    <experiments>3</experiments>
</comment>
<comment type="interaction">
    <interactant intactId="EBI-10172052">
        <id>P60411</id>
    </interactant>
    <interactant intactId="EBI-10245291">
        <id>Q5T5A8</id>
        <label>LCE3C</label>
    </interactant>
    <organismsDiffer>false</organismsDiffer>
    <experiments>10</experiments>
</comment>
<comment type="interaction">
    <interactant intactId="EBI-10172052">
        <id>P60411</id>
    </interactant>
    <interactant intactId="EBI-6658837">
        <id>Q9BYE3</id>
        <label>LCE3D</label>
    </interactant>
    <organismsDiffer>false</organismsDiffer>
    <experiments>3</experiments>
</comment>
<comment type="interaction">
    <interactant intactId="EBI-10172052">
        <id>P60411</id>
    </interactant>
    <interactant intactId="EBI-10245456">
        <id>Q5T5B0</id>
        <label>LCE3E</label>
    </interactant>
    <organismsDiffer>false</organismsDiffer>
    <experiments>7</experiments>
</comment>
<comment type="interaction">
    <interactant intactId="EBI-10172052">
        <id>P60411</id>
    </interactant>
    <interactant intactId="EBI-10246358">
        <id>Q5TA78</id>
        <label>LCE4A</label>
    </interactant>
    <organismsDiffer>false</organismsDiffer>
    <experiments>6</experiments>
</comment>
<comment type="interaction">
    <interactant intactId="EBI-10172052">
        <id>P60411</id>
    </interactant>
    <interactant intactId="EBI-11955689">
        <id>Q5TCM9</id>
        <label>LCE5A</label>
    </interactant>
    <organismsDiffer>false</organismsDiffer>
    <experiments>4</experiments>
</comment>
<comment type="interaction">
    <interactant intactId="EBI-10172052">
        <id>P60411</id>
    </interactant>
    <interactant intactId="EBI-10198848">
        <id>Q9P127</id>
        <label>LUZP4</label>
    </interactant>
    <organismsDiffer>false</organismsDiffer>
    <experiments>3</experiments>
</comment>
<comment type="interaction">
    <interactant intactId="EBI-10172052">
        <id>P60411</id>
    </interactant>
    <interactant intactId="EBI-10268010">
        <id>Q8N8X9</id>
        <label>MAB21L3</label>
    </interactant>
    <organismsDiffer>false</organismsDiffer>
    <experiments>3</experiments>
</comment>
<comment type="interaction">
    <interactant intactId="EBI-10172052">
        <id>P60411</id>
    </interactant>
    <interactant intactId="EBI-947402">
        <id>O60336</id>
        <label>MAPKBP1</label>
    </interactant>
    <organismsDiffer>false</organismsDiffer>
    <experiments>3</experiments>
</comment>
<comment type="interaction">
    <interactant intactId="EBI-10172052">
        <id>P60411</id>
    </interactant>
    <interactant intactId="EBI-12068586">
        <id>P56270-2</id>
        <label>MAZ</label>
    </interactant>
    <organismsDiffer>false</organismsDiffer>
    <experiments>3</experiments>
</comment>
<comment type="interaction">
    <interactant intactId="EBI-10172052">
        <id>P60411</id>
    </interactant>
    <interactant intactId="EBI-394659">
        <id>Q96HR3</id>
        <label>MED30</label>
    </interactant>
    <organismsDiffer>false</organismsDiffer>
    <experiments>3</experiments>
</comment>
<comment type="interaction">
    <interactant intactId="EBI-10172052">
        <id>P60411</id>
    </interactant>
    <interactant intactId="EBI-748397">
        <id>P50222</id>
        <label>MEOX2</label>
    </interactant>
    <organismsDiffer>false</organismsDiffer>
    <experiments>4</experiments>
</comment>
<comment type="interaction">
    <interactant intactId="EBI-10172052">
        <id>P60411</id>
    </interactant>
    <interactant intactId="EBI-16439278">
        <id>Q6FHY5</id>
        <label>MEOX2</label>
    </interactant>
    <organismsDiffer>false</organismsDiffer>
    <experiments>3</experiments>
</comment>
<comment type="interaction">
    <interactant intactId="EBI-10172052">
        <id>P60411</id>
    </interactant>
    <interactant intactId="EBI-10230628">
        <id>Q13875</id>
        <label>MOBP</label>
    </interactant>
    <organismsDiffer>false</organismsDiffer>
    <experiments>6</experiments>
</comment>
<comment type="interaction">
    <interactant intactId="EBI-10172052">
        <id>P60411</id>
    </interactant>
    <interactant intactId="EBI-12013470">
        <id>Q13875-3</id>
        <label>MOBP</label>
    </interactant>
    <organismsDiffer>false</organismsDiffer>
    <experiments>3</experiments>
</comment>
<comment type="interaction">
    <interactant intactId="EBI-10172052">
        <id>P60411</id>
    </interactant>
    <interactant intactId="EBI-10172129">
        <id>A1L3X4</id>
        <label>MT1DP</label>
    </interactant>
    <organismsDiffer>false</organismsDiffer>
    <experiments>3</experiments>
</comment>
<comment type="interaction">
    <interactant intactId="EBI-10172052">
        <id>P60411</id>
    </interactant>
    <interactant intactId="EBI-10211940">
        <id>P50539-3</id>
        <label>MXI1</label>
    </interactant>
    <organismsDiffer>false</organismsDiffer>
    <experiments>3</experiments>
</comment>
<comment type="interaction">
    <interactant intactId="EBI-10172052">
        <id>P60411</id>
    </interactant>
    <interactant intactId="EBI-2858213">
        <id>Q86VE0</id>
        <label>MYPOP</label>
    </interactant>
    <organismsDiffer>false</organismsDiffer>
    <experiments>3</experiments>
</comment>
<comment type="interaction">
    <interactant intactId="EBI-10172052">
        <id>P60411</id>
    </interactant>
    <interactant intactId="EBI-8650724">
        <id>Q8IW45</id>
        <label>NAXD</label>
    </interactant>
    <organismsDiffer>false</organismsDiffer>
    <experiments>3</experiments>
</comment>
<comment type="interaction">
    <interactant intactId="EBI-10172052">
        <id>P60411</id>
    </interactant>
    <interactant intactId="EBI-2826725">
        <id>Q9NQS3</id>
        <label>NECTIN3</label>
    </interactant>
    <organismsDiffer>false</organismsDiffer>
    <experiments>3</experiments>
</comment>
<comment type="interaction">
    <interactant intactId="EBI-10172052">
        <id>P60411</id>
    </interactant>
    <interactant intactId="EBI-1538217">
        <id>Q969G9</id>
        <label>NKD1</label>
    </interactant>
    <organismsDiffer>false</organismsDiffer>
    <experiments>3</experiments>
</comment>
<comment type="interaction">
    <interactant intactId="EBI-10172052">
        <id>P60411</id>
    </interactant>
    <interactant intactId="EBI-945833">
        <id>Q7Z3S9</id>
        <label>NOTCH2NLA</label>
    </interactant>
    <organismsDiffer>false</organismsDiffer>
    <experiments>3</experiments>
</comment>
<comment type="interaction">
    <interactant intactId="EBI-10172052">
        <id>P60411</id>
    </interactant>
    <interactant intactId="EBI-22310682">
        <id>P0DPK4</id>
        <label>NOTCH2NLC</label>
    </interactant>
    <organismsDiffer>false</organismsDiffer>
    <experiments>3</experiments>
</comment>
<comment type="interaction">
    <interactant intactId="EBI-10172052">
        <id>P60411</id>
    </interactant>
    <interactant intactId="EBI-10210114">
        <id>P48146</id>
        <label>NPBWR2</label>
    </interactant>
    <organismsDiffer>false</organismsDiffer>
    <experiments>3</experiments>
</comment>
<comment type="interaction">
    <interactant intactId="EBI-10172052">
        <id>P60411</id>
    </interactant>
    <interactant intactId="EBI-748927">
        <id>Q9NQX5</id>
        <label>NPDC1</label>
    </interactant>
    <organismsDiffer>false</organismsDiffer>
    <experiments>6</experiments>
</comment>
<comment type="interaction">
    <interactant intactId="EBI-10172052">
        <id>P60411</id>
    </interactant>
    <interactant intactId="EBI-747044">
        <id>P16860</id>
        <label>NPPB</label>
    </interactant>
    <organismsDiffer>false</organismsDiffer>
    <experiments>3</experiments>
</comment>
<comment type="interaction">
    <interactant intactId="EBI-10172052">
        <id>P60411</id>
    </interactant>
    <interactant intactId="EBI-10250949">
        <id>Q6NSM0</id>
        <label>NR1D2</label>
    </interactant>
    <organismsDiffer>false</organismsDiffer>
    <experiments>4</experiments>
</comment>
<comment type="interaction">
    <interactant intactId="EBI-10172052">
        <id>P60411</id>
    </interactant>
    <interactant intactId="EBI-1210753">
        <id>Q7Z417</id>
        <label>NUFIP2</label>
    </interactant>
    <organismsDiffer>false</organismsDiffer>
    <experiments>8</experiments>
</comment>
<comment type="interaction">
    <interactant intactId="EBI-10172052">
        <id>P60411</id>
    </interactant>
    <interactant intactId="EBI-740446">
        <id>P32242</id>
        <label>OTX1</label>
    </interactant>
    <organismsDiffer>false</organismsDiffer>
    <experiments>9</experiments>
</comment>
<comment type="interaction">
    <interactant intactId="EBI-10172052">
        <id>P60411</id>
    </interactant>
    <interactant intactId="EBI-11956269">
        <id>Q92824-2</id>
        <label>PCSK5</label>
    </interactant>
    <organismsDiffer>false</organismsDiffer>
    <experiments>3</experiments>
</comment>
<comment type="interaction">
    <interactant intactId="EBI-10172052">
        <id>P60411</id>
    </interactant>
    <interactant intactId="EBI-11524542">
        <id>O76083-2</id>
        <label>PDE9A</label>
    </interactant>
    <organismsDiffer>false</organismsDiffer>
    <experiments>3</experiments>
</comment>
<comment type="interaction">
    <interactant intactId="EBI-10172052">
        <id>P60411</id>
    </interactant>
    <interactant intactId="EBI-641237">
        <id>P09619</id>
        <label>PDGFRB</label>
    </interactant>
    <organismsDiffer>false</organismsDiffer>
    <experiments>3</experiments>
</comment>
<comment type="interaction">
    <interactant intactId="EBI-10172052">
        <id>P60411</id>
    </interactant>
    <interactant intactId="EBI-10321427">
        <id>Q9UHJ9</id>
        <label>PGAP2</label>
    </interactant>
    <organismsDiffer>false</organismsDiffer>
    <experiments>3</experiments>
</comment>
<comment type="interaction">
    <interactant intactId="EBI-10172052">
        <id>P60411</id>
    </interactant>
    <interactant intactId="EBI-2908273">
        <id>Q96S52</id>
        <label>PIGS</label>
    </interactant>
    <organismsDiffer>false</organismsDiffer>
    <experiments>3</experiments>
</comment>
<comment type="interaction">
    <interactant intactId="EBI-10172052">
        <id>P60411</id>
    </interactant>
    <interactant intactId="EBI-714158">
        <id>Q13526</id>
        <label>PIN1</label>
    </interactant>
    <organismsDiffer>false</organismsDiffer>
    <experiments>3</experiments>
</comment>
<comment type="interaction">
    <interactant intactId="EBI-10172052">
        <id>P60411</id>
    </interactant>
    <interactant intactId="EBI-740019">
        <id>O15162</id>
        <label>PLSCR1</label>
    </interactant>
    <organismsDiffer>false</organismsDiffer>
    <experiments>3</experiments>
</comment>
<comment type="interaction">
    <interactant intactId="EBI-10172052">
        <id>P60411</id>
    </interactant>
    <interactant intactId="EBI-17236143">
        <id>Q12837</id>
        <label>POU4F2</label>
    </interactant>
    <organismsDiffer>false</organismsDiffer>
    <experiments>6</experiments>
</comment>
<comment type="interaction">
    <interactant intactId="EBI-10172052">
        <id>P60411</id>
    </interactant>
    <interactant intactId="EBI-1383852">
        <id>P54646</id>
        <label>PRKAA2</label>
    </interactant>
    <organismsDiffer>false</organismsDiffer>
    <experiments>3</experiments>
</comment>
<comment type="interaction">
    <interactant intactId="EBI-10172052">
        <id>P60411</id>
    </interactant>
    <interactant intactId="EBI-1053424">
        <id>O43741</id>
        <label>PRKAB2</label>
    </interactant>
    <organismsDiffer>false</organismsDiffer>
    <experiments>6</experiments>
</comment>
<comment type="interaction">
    <interactant intactId="EBI-10172052">
        <id>P60411</id>
    </interactant>
    <interactant intactId="EBI-1567797">
        <id>Q8WWY3</id>
        <label>PRPF31</label>
    </interactant>
    <organismsDiffer>false</organismsDiffer>
    <experiments>6</experiments>
</comment>
<comment type="interaction">
    <interactant intactId="EBI-10172052">
        <id>P60411</id>
    </interactant>
    <interactant intactId="EBI-10234038">
        <id>P43115-12</id>
        <label>PTGER3</label>
    </interactant>
    <organismsDiffer>false</organismsDiffer>
    <experiments>3</experiments>
</comment>
<comment type="interaction">
    <interactant intactId="EBI-10172052">
        <id>P60411</id>
    </interactant>
    <interactant intactId="EBI-7199479">
        <id>Q8WUK0</id>
        <label>PTPMT1</label>
    </interactant>
    <organismsDiffer>false</organismsDiffer>
    <experiments>3</experiments>
</comment>
<comment type="interaction">
    <interactant intactId="EBI-10172052">
        <id>P60411</id>
    </interactant>
    <interactant intactId="EBI-3919694">
        <id>P15151</id>
        <label>PVR</label>
    </interactant>
    <organismsDiffer>false</organismsDiffer>
    <experiments>3</experiments>
</comment>
<comment type="interaction">
    <interactant intactId="EBI-10172052">
        <id>P60411</id>
    </interactant>
    <interactant intactId="EBI-740818">
        <id>Q9Y272</id>
        <label>RASD1</label>
    </interactant>
    <organismsDiffer>false</organismsDiffer>
    <experiments>3</experiments>
</comment>
<comment type="interaction">
    <interactant intactId="EBI-10172052">
        <id>P60411</id>
    </interactant>
    <interactant intactId="EBI-9658624">
        <id>Q9BSD3</id>
        <label>RHNO1</label>
    </interactant>
    <organismsDiffer>false</organismsDiffer>
    <experiments>3</experiments>
</comment>
<comment type="interaction">
    <interactant intactId="EBI-10172052">
        <id>P60411</id>
    </interactant>
    <interactant intactId="EBI-8481036">
        <id>Q6UXX9</id>
        <label>RSPO2</label>
    </interactant>
    <organismsDiffer>false</organismsDiffer>
    <experiments>3</experiments>
</comment>
<comment type="interaction">
    <interactant intactId="EBI-10172052">
        <id>P60411</id>
    </interactant>
    <interactant intactId="EBI-78657">
        <id>Q8WTV0</id>
        <label>SCARB1</label>
    </interactant>
    <organismsDiffer>false</organismsDiffer>
    <experiments>3</experiments>
</comment>
<comment type="interaction">
    <interactant intactId="EBI-10172052">
        <id>P60411</id>
    </interactant>
    <interactant intactId="EBI-748391">
        <id>Q9BWG6</id>
        <label>SCNM1</label>
    </interactant>
    <organismsDiffer>false</organismsDiffer>
    <experiments>3</experiments>
</comment>
<comment type="interaction">
    <interactant intactId="EBI-10172052">
        <id>P60411</id>
    </interactant>
    <interactant intactId="EBI-11017428">
        <id>Q13214-2</id>
        <label>SEMA3B</label>
    </interactant>
    <organismsDiffer>false</organismsDiffer>
    <experiments>3</experiments>
</comment>
<comment type="interaction">
    <interactant intactId="EBI-10172052">
        <id>P60411</id>
    </interactant>
    <interactant intactId="EBI-10313866">
        <id>Q9NUL5</id>
        <label>SHFL</label>
    </interactant>
    <organismsDiffer>false</organismsDiffer>
    <experiments>3</experiments>
</comment>
<comment type="interaction">
    <interactant intactId="EBI-10172052">
        <id>P60411</id>
    </interactant>
    <interactant intactId="EBI-11955083">
        <id>Q9NUL5-4</id>
        <label>SHFL</label>
    </interactant>
    <organismsDiffer>false</organismsDiffer>
    <experiments>3</experiments>
</comment>
<comment type="interaction">
    <interactant intactId="EBI-10172052">
        <id>P60411</id>
    </interactant>
    <interactant intactId="EBI-1759386">
        <id>Q9UHI7</id>
        <label>SLC23A1</label>
    </interactant>
    <organismsDiffer>false</organismsDiffer>
    <experiments>3</experiments>
</comment>
<comment type="interaction">
    <interactant intactId="EBI-10172052">
        <id>P60411</id>
    </interactant>
    <interactant intactId="EBI-10311198">
        <id>Q9NP91</id>
        <label>SLC6A20</label>
    </interactant>
    <organismsDiffer>false</organismsDiffer>
    <experiments>3</experiments>
</comment>
<comment type="interaction">
    <interactant intactId="EBI-10172052">
        <id>P60411</id>
    </interactant>
    <interactant intactId="EBI-455078">
        <id>Q969G3</id>
        <label>SMARCE1</label>
    </interactant>
    <organismsDiffer>false</organismsDiffer>
    <experiments>3</experiments>
</comment>
<comment type="interaction">
    <interactant intactId="EBI-10172052">
        <id>P60411</id>
    </interactant>
    <interactant intactId="EBI-750494">
        <id>P49901</id>
        <label>SMCP</label>
    </interactant>
    <organismsDiffer>false</organismsDiffer>
    <experiments>8</experiments>
</comment>
<comment type="interaction">
    <interactant intactId="EBI-10172052">
        <id>P60411</id>
    </interactant>
    <interactant intactId="EBI-722584">
        <id>Q96E40</id>
        <label>SPACA9</label>
    </interactant>
    <organismsDiffer>false</organismsDiffer>
    <experiments>3</experiments>
</comment>
<comment type="interaction">
    <interactant intactId="EBI-10172052">
        <id>P60411</id>
    </interactant>
    <interactant intactId="EBI-8635958">
        <id>Q6RVD6</id>
        <label>SPATA8</label>
    </interactant>
    <organismsDiffer>false</organismsDiffer>
    <experiments>3</experiments>
</comment>
<comment type="interaction">
    <interactant intactId="EBI-10172052">
        <id>P60411</id>
    </interactant>
    <interactant intactId="EBI-717201">
        <id>Q9UQ90</id>
        <label>SPG7</label>
    </interactant>
    <organismsDiffer>false</organismsDiffer>
    <experiments>3</experiments>
</comment>
<comment type="interaction">
    <interactant intactId="EBI-10172052">
        <id>P60411</id>
    </interactant>
    <interactant intactId="EBI-3866665">
        <id>O43609</id>
        <label>SPRY1</label>
    </interactant>
    <organismsDiffer>false</organismsDiffer>
    <experiments>6</experiments>
</comment>
<comment type="interaction">
    <interactant intactId="EBI-10172052">
        <id>P60411</id>
    </interactant>
    <interactant intactId="EBI-742487">
        <id>O43597</id>
        <label>SPRY2</label>
    </interactant>
    <organismsDiffer>false</organismsDiffer>
    <experiments>3</experiments>
</comment>
<comment type="interaction">
    <interactant intactId="EBI-10172052">
        <id>P60411</id>
    </interactant>
    <interactant intactId="EBI-749295">
        <id>O75716</id>
        <label>STK16</label>
    </interactant>
    <organismsDiffer>false</organismsDiffer>
    <experiments>3</experiments>
</comment>
<comment type="interaction">
    <interactant intactId="EBI-10172052">
        <id>P60411</id>
    </interactant>
    <interactant intactId="EBI-2853126">
        <id>Q9NUY8</id>
        <label>TBC1D23</label>
    </interactant>
    <organismsDiffer>false</organismsDiffer>
    <experiments>3</experiments>
</comment>
<comment type="interaction">
    <interactant intactId="EBI-10172052">
        <id>P60411</id>
    </interactant>
    <interactant intactId="EBI-10314276">
        <id>Q9NUY8-2</id>
        <label>TBC1D23</label>
    </interactant>
    <organismsDiffer>false</organismsDiffer>
    <experiments>3</experiments>
</comment>
<comment type="interaction">
    <interactant intactId="EBI-10172052">
        <id>P60411</id>
    </interactant>
    <interactant intactId="EBI-8465456">
        <id>Q7L2K0</id>
        <label>TEDC2</label>
    </interactant>
    <organismsDiffer>false</organismsDiffer>
    <experiments>3</experiments>
</comment>
<comment type="interaction">
    <interactant intactId="EBI-10172052">
        <id>P60411</id>
    </interactant>
    <interactant intactId="EBI-1752146">
        <id>O43493</id>
        <label>TGOLN2</label>
    </interactant>
    <organismsDiffer>false</organismsDiffer>
    <experiments>3</experiments>
</comment>
<comment type="interaction">
    <interactant intactId="EBI-10172052">
        <id>P60411</id>
    </interactant>
    <interactant intactId="EBI-745404">
        <id>Q9P2Z0</id>
        <label>THAP10</label>
    </interactant>
    <organismsDiffer>false</organismsDiffer>
    <experiments>3</experiments>
</comment>
<comment type="interaction">
    <interactant intactId="EBI-10172052">
        <id>P60411</id>
    </interactant>
    <interactant intactId="EBI-717810">
        <id>Q08117</id>
        <label>TLE5</label>
    </interactant>
    <organismsDiffer>false</organismsDiffer>
    <experiments>3</experiments>
</comment>
<comment type="interaction">
    <interactant intactId="EBI-10172052">
        <id>P60411</id>
    </interactant>
    <interactant intactId="EBI-524171">
        <id>O95407</id>
        <label>TNFRSF6B</label>
    </interactant>
    <organismsDiffer>false</organismsDiffer>
    <experiments>3</experiments>
</comment>
<comment type="interaction">
    <interactant intactId="EBI-10172052">
        <id>P60411</id>
    </interactant>
    <interactant intactId="EBI-12039775">
        <id>Q05952</id>
        <label>TNP2</label>
    </interactant>
    <organismsDiffer>false</organismsDiffer>
    <experiments>3</experiments>
</comment>
<comment type="interaction">
    <interactant intactId="EBI-10172052">
        <id>P60411</id>
    </interactant>
    <interactant intactId="EBI-10241829">
        <id>Q4VB56</id>
        <label>TNP2</label>
    </interactant>
    <organismsDiffer>false</organismsDiffer>
    <experiments>3</experiments>
</comment>
<comment type="interaction">
    <interactant intactId="EBI-10172052">
        <id>P60411</id>
    </interactant>
    <interactant intactId="EBI-725997">
        <id>Q8WV44</id>
        <label>TRIM41</label>
    </interactant>
    <organismsDiffer>false</organismsDiffer>
    <experiments>5</experiments>
</comment>
<comment type="interaction">
    <interactant intactId="EBI-10172052">
        <id>P60411</id>
    </interactant>
    <interactant intactId="EBI-5235829">
        <id>Q8IWZ5</id>
        <label>TRIM42</label>
    </interactant>
    <organismsDiffer>false</organismsDiffer>
    <experiments>6</experiments>
</comment>
<comment type="interaction">
    <interactant intactId="EBI-10172052">
        <id>P60411</id>
    </interactant>
    <interactant intactId="EBI-2825190">
        <id>Q86UY0</id>
        <label>TXNDC5</label>
    </interactant>
    <organismsDiffer>false</organismsDiffer>
    <experiments>3</experiments>
</comment>
<comment type="interaction">
    <interactant intactId="EBI-10172052">
        <id>P60411</id>
    </interactant>
    <interactant intactId="EBI-742060">
        <id>Q8TAI1</id>
        <label>TYMSOS</label>
    </interactant>
    <organismsDiffer>false</organismsDiffer>
    <experiments>3</experiments>
</comment>
<comment type="interaction">
    <interactant intactId="EBI-10172052">
        <id>P60411</id>
    </interactant>
    <interactant intactId="EBI-3951628">
        <id>Q06418</id>
        <label>TYRO3</label>
    </interactant>
    <organismsDiffer>false</organismsDiffer>
    <experiments>3</experiments>
</comment>
<comment type="interaction">
    <interactant intactId="EBI-10172052">
        <id>P60411</id>
    </interactant>
    <interactant intactId="EBI-5457544">
        <id>Q9BRU9</id>
        <label>UTP23</label>
    </interactant>
    <organismsDiffer>false</organismsDiffer>
    <experiments>3</experiments>
</comment>
<comment type="interaction">
    <interactant intactId="EBI-10172052">
        <id>P60411</id>
    </interactant>
    <interactant intactId="EBI-11957216">
        <id>A8MV65-2</id>
        <label>VGLL3</label>
    </interactant>
    <organismsDiffer>false</organismsDiffer>
    <experiments>3</experiments>
</comment>
<comment type="interaction">
    <interactant intactId="EBI-10172052">
        <id>P60411</id>
    </interactant>
    <interactant intactId="EBI-8058160">
        <id>O96014</id>
        <label>WNT11</label>
    </interactant>
    <organismsDiffer>false</organismsDiffer>
    <experiments>3</experiments>
</comment>
<comment type="interaction">
    <interactant intactId="EBI-10172052">
        <id>P60411</id>
    </interactant>
    <interactant intactId="EBI-10223946">
        <id>Q06250</id>
        <label>WT1-AS</label>
    </interactant>
    <organismsDiffer>false</organismsDiffer>
    <experiments>3</experiments>
</comment>
<comment type="interaction">
    <interactant intactId="EBI-10172052">
        <id>P60411</id>
    </interactant>
    <interactant intactId="EBI-10319095">
        <id>Q9UBD3</id>
        <label>XCL2</label>
    </interactant>
    <organismsDiffer>false</organismsDiffer>
    <experiments>3</experiments>
</comment>
<comment type="interaction">
    <interactant intactId="EBI-10172052">
        <id>P60411</id>
    </interactant>
    <interactant intactId="EBI-743787">
        <id>Q9GZM5</id>
        <label>YIPF3</label>
    </interactant>
    <organismsDiffer>false</organismsDiffer>
    <experiments>3</experiments>
</comment>
<comment type="interaction">
    <interactant intactId="EBI-10172052">
        <id>P60411</id>
    </interactant>
    <interactant intactId="EBI-765538">
        <id>P25490</id>
        <label>YY1</label>
    </interactant>
    <organismsDiffer>false</organismsDiffer>
    <experiments>3</experiments>
</comment>
<comment type="interaction">
    <interactant intactId="EBI-10172052">
        <id>P60411</id>
    </interactant>
    <interactant intactId="EBI-744471">
        <id>O43167</id>
        <label>ZBTB24</label>
    </interactant>
    <organismsDiffer>false</organismsDiffer>
    <experiments>3</experiments>
</comment>
<comment type="interaction">
    <interactant intactId="EBI-10172052">
        <id>P60411</id>
    </interactant>
    <interactant intactId="EBI-395708">
        <id>Q96C00</id>
        <label>ZBTB9</label>
    </interactant>
    <organismsDiffer>false</organismsDiffer>
    <experiments>6</experiments>
</comment>
<comment type="interaction">
    <interactant intactId="EBI-10172052">
        <id>P60411</id>
    </interactant>
    <interactant intactId="EBI-8656416">
        <id>Q68DK2-5</id>
        <label>ZFYVE26</label>
    </interactant>
    <organismsDiffer>false</organismsDiffer>
    <experiments>3</experiments>
</comment>
<comment type="interaction">
    <interactant intactId="EBI-10172052">
        <id>P60411</id>
    </interactant>
    <interactant intactId="EBI-2555767">
        <id>Q15973</id>
        <label>ZNF124</label>
    </interactant>
    <organismsDiffer>false</organismsDiffer>
    <experiments>6</experiments>
</comment>
<comment type="interaction">
    <interactant intactId="EBI-10172052">
        <id>P60411</id>
    </interactant>
    <interactant intactId="EBI-10227379">
        <id>Q12901-2</id>
        <label>ZNF155</label>
    </interactant>
    <organismsDiffer>false</organismsDiffer>
    <experiments>3</experiments>
</comment>
<comment type="interaction">
    <interactant intactId="EBI-10172052">
        <id>P60411</id>
    </interactant>
    <interactant intactId="EBI-741694">
        <id>P49910</id>
        <label>ZNF165</label>
    </interactant>
    <organismsDiffer>false</organismsDiffer>
    <experiments>3</experiments>
</comment>
<comment type="interaction">
    <interactant intactId="EBI-10172052">
        <id>P60411</id>
    </interactant>
    <interactant intactId="EBI-717634">
        <id>P17024</id>
        <label>ZNF20</label>
    </interactant>
    <organismsDiffer>false</organismsDiffer>
    <experiments>3</experiments>
</comment>
<comment type="interaction">
    <interactant intactId="EBI-10172052">
        <id>P60411</id>
    </interactant>
    <interactant intactId="EBI-7254491">
        <id>Q9BRH9</id>
        <label>ZNF251</label>
    </interactant>
    <organismsDiffer>false</organismsDiffer>
    <experiments>3</experiments>
</comment>
<comment type="interaction">
    <interactant intactId="EBI-10172052">
        <id>P60411</id>
    </interactant>
    <interactant intactId="EBI-2826570">
        <id>Q14C61</id>
        <label>ZNF264</label>
    </interactant>
    <organismsDiffer>false</organismsDiffer>
    <experiments>3</experiments>
</comment>
<comment type="interaction">
    <interactant intactId="EBI-10172052">
        <id>P60411</id>
    </interactant>
    <interactant intactId="EBI-17263125">
        <id>Q9NSD4</id>
        <label>ZNF275</label>
    </interactant>
    <organismsDiffer>false</organismsDiffer>
    <experiments>3</experiments>
</comment>
<comment type="interaction">
    <interactant intactId="EBI-10172052">
        <id>P60411</id>
    </interactant>
    <interactant intactId="EBI-10754950">
        <id>Q9HBT8</id>
        <label>ZNF286A</label>
    </interactant>
    <organismsDiffer>false</organismsDiffer>
    <experiments>3</experiments>
</comment>
<comment type="interaction">
    <interactant intactId="EBI-10172052">
        <id>P60411</id>
    </interactant>
    <interactant intactId="EBI-10292528">
        <id>Q96PQ6-4</id>
        <label>ZNF317</label>
    </interactant>
    <organismsDiffer>false</organismsDiffer>
    <experiments>3</experiments>
</comment>
<comment type="interaction">
    <interactant intactId="EBI-10172052">
        <id>P60411</id>
    </interactant>
    <interactant intactId="EBI-11993110">
        <id>Q9P2F9</id>
        <label>ZNF319</label>
    </interactant>
    <organismsDiffer>false</organismsDiffer>
    <experiments>3</experiments>
</comment>
<comment type="interaction">
    <interactant intactId="EBI-10172052">
        <id>P60411</id>
    </interactant>
    <interactant intactId="EBI-740727">
        <id>Q8TAU3</id>
        <label>ZNF417</label>
    </interactant>
    <organismsDiffer>false</organismsDiffer>
    <experiments>3</experiments>
</comment>
<comment type="interaction">
    <interactant intactId="EBI-10172052">
        <id>P60411</id>
    </interactant>
    <interactant intactId="EBI-10267553">
        <id>Q8N7K0</id>
        <label>ZNF433</label>
    </interactant>
    <organismsDiffer>false</organismsDiffer>
    <experiments>3</experiments>
</comment>
<comment type="interaction">
    <interactant intactId="EBI-10172052">
        <id>P60411</id>
    </interactant>
    <interactant intactId="EBI-747580">
        <id>Q8NDP4</id>
        <label>ZNF439</label>
    </interactant>
    <organismsDiffer>false</organismsDiffer>
    <experiments>3</experiments>
</comment>
<comment type="interaction">
    <interactant intactId="EBI-10172052">
        <id>P60411</id>
    </interactant>
    <interactant intactId="EBI-726439">
        <id>Q8IYI8</id>
        <label>ZNF440</label>
    </interactant>
    <organismsDiffer>false</organismsDiffer>
    <experiments>6</experiments>
</comment>
<comment type="interaction">
    <interactant intactId="EBI-10172052">
        <id>P60411</id>
    </interactant>
    <interactant intactId="EBI-751409">
        <id>Q8WTR7</id>
        <label>ZNF473</label>
    </interactant>
    <organismsDiffer>false</organismsDiffer>
    <experiments>3</experiments>
</comment>
<comment type="interaction">
    <interactant intactId="EBI-10172052">
        <id>P60411</id>
    </interactant>
    <interactant intactId="EBI-10486136">
        <id>Q6ZNH5</id>
        <label>ZNF497</label>
    </interactant>
    <organismsDiffer>false</organismsDiffer>
    <experiments>3</experiments>
</comment>
<comment type="interaction">
    <interactant intactId="EBI-10172052">
        <id>P60411</id>
    </interactant>
    <interactant intactId="EBI-10283126">
        <id>Q96C55</id>
        <label>ZNF524</label>
    </interactant>
    <organismsDiffer>false</organismsDiffer>
    <experiments>3</experiments>
</comment>
<comment type="interaction">
    <interactant intactId="EBI-10172052">
        <id>P60411</id>
    </interactant>
    <interactant intactId="EBI-10273713">
        <id>Q8TBZ8</id>
        <label>ZNF564</label>
    </interactant>
    <organismsDiffer>false</organismsDiffer>
    <experiments>3</experiments>
</comment>
<comment type="interaction">
    <interactant intactId="EBI-10172052">
        <id>P60411</id>
    </interactant>
    <interactant intactId="EBI-10172590">
        <id>Q7Z3I7</id>
        <label>ZNF572</label>
    </interactant>
    <organismsDiffer>false</organismsDiffer>
    <experiments>6</experiments>
</comment>
<comment type="interaction">
    <interactant intactId="EBI-10172052">
        <id>P60411</id>
    </interactant>
    <interactant intactId="EBI-10241108">
        <id>Q3MI94</id>
        <label>ZNF578</label>
    </interactant>
    <organismsDiffer>false</organismsDiffer>
    <experiments>3</experiments>
</comment>
<comment type="interaction">
    <interactant intactId="EBI-10172052">
        <id>P60411</id>
    </interactant>
    <interactant intactId="EBI-745520">
        <id>Q9P0T4</id>
        <label>ZNF581</label>
    </interactant>
    <organismsDiffer>false</organismsDiffer>
    <experiments>3</experiments>
</comment>
<comment type="interaction">
    <interactant intactId="EBI-10172052">
        <id>P60411</id>
    </interactant>
    <interactant intactId="EBI-6427977">
        <id>Q96SQ5</id>
        <label>ZNF587</label>
    </interactant>
    <organismsDiffer>false</organismsDiffer>
    <experiments>6</experiments>
</comment>
<comment type="interaction">
    <interactant intactId="EBI-10172052">
        <id>P60411</id>
    </interactant>
    <interactant intactId="EBI-8653994">
        <id>Q96NL3</id>
        <label>ZNF599</label>
    </interactant>
    <organismsDiffer>false</organismsDiffer>
    <experiments>3</experiments>
</comment>
<comment type="interaction">
    <interactant intactId="EBI-10172052">
        <id>P60411</id>
    </interactant>
    <interactant intactId="EBI-4395587">
        <id>Q96I27</id>
        <label>ZNF625</label>
    </interactant>
    <organismsDiffer>false</organismsDiffer>
    <experiments>3</experiments>
</comment>
<comment type="interaction">
    <interactant intactId="EBI-10172052">
        <id>P60411</id>
    </interactant>
    <interactant intactId="EBI-16429014">
        <id>A0A0S2Z5X4</id>
        <label>ZNF688</label>
    </interactant>
    <organismsDiffer>false</organismsDiffer>
    <experiments>3</experiments>
</comment>
<comment type="interaction">
    <interactant intactId="EBI-10172052">
        <id>P60411</id>
    </interactant>
    <interactant intactId="EBI-11090299">
        <id>Q9H7X3</id>
        <label>ZNF696</label>
    </interactant>
    <organismsDiffer>false</organismsDiffer>
    <experiments>3</experiments>
</comment>
<comment type="interaction">
    <interactant intactId="EBI-10172052">
        <id>P60411</id>
    </interactant>
    <interactant intactId="EBI-10265733">
        <id>Q8N508</id>
        <label>ZNF697</label>
    </interactant>
    <organismsDiffer>false</organismsDiffer>
    <experiments>3</experiments>
</comment>
<comment type="interaction">
    <interactant intactId="EBI-10172052">
        <id>P60411</id>
    </interactant>
    <interactant intactId="EBI-10217363">
        <id>Q32M78</id>
        <label>ZNF699</label>
    </interactant>
    <organismsDiffer>false</organismsDiffer>
    <experiments>3</experiments>
</comment>
<comment type="interaction">
    <interactant intactId="EBI-10172052">
        <id>P60411</id>
    </interactant>
    <interactant intactId="EBI-745775">
        <id>Q96H86</id>
        <label>ZNF764</label>
    </interactant>
    <organismsDiffer>false</organismsDiffer>
    <experiments>3</experiments>
</comment>
<comment type="interaction">
    <interactant intactId="EBI-10172052">
        <id>P60411</id>
    </interactant>
    <interactant intactId="EBI-10251462">
        <id>Q6NX45</id>
        <label>ZNF774</label>
    </interactant>
    <organismsDiffer>false</organismsDiffer>
    <experiments>6</experiments>
</comment>
<comment type="interaction">
    <interactant intactId="EBI-10172052">
        <id>P60411</id>
    </interactant>
    <interactant intactId="EBI-11975599">
        <id>Q9ULD5</id>
        <label>ZNF777</label>
    </interactant>
    <organismsDiffer>false</organismsDiffer>
    <experiments>3</experiments>
</comment>
<comment type="interaction">
    <interactant intactId="EBI-10172052">
        <id>P60411</id>
    </interactant>
    <interactant intactId="EBI-10240849">
        <id>Q3KQV3</id>
        <label>ZNF792</label>
    </interactant>
    <organismsDiffer>false</organismsDiffer>
    <experiments>6</experiments>
</comment>
<comment type="interaction">
    <interactant intactId="EBI-10172052">
        <id>P60411</id>
    </interactant>
    <interactant intactId="EBI-12013828">
        <id>P51504</id>
        <label>ZNF80</label>
    </interactant>
    <organismsDiffer>false</organismsDiffer>
    <experiments>3</experiments>
</comment>
<comment type="interaction">
    <interactant intactId="EBI-10172052">
        <id>P60411</id>
    </interactant>
    <interactant intactId="EBI-11962574">
        <id>Q96EG3</id>
        <label>ZNF837</label>
    </interactant>
    <organismsDiffer>false</organismsDiffer>
    <experiments>3</experiments>
</comment>
<comment type="interaction">
    <interactant intactId="EBI-10172052">
        <id>P60411</id>
    </interactant>
    <interactant intactId="EBI-10225757">
        <id>Q08AG5</id>
        <label>ZNF844</label>
    </interactant>
    <organismsDiffer>false</organismsDiffer>
    <experiments>3</experiments>
</comment>
<comment type="interaction">
    <interactant intactId="EBI-10172052">
        <id>P60411</id>
    </interactant>
    <interactant intactId="EBI-17263060">
        <id>A6NHJ4</id>
        <label>ZNF860</label>
    </interactant>
    <organismsDiffer>false</organismsDiffer>
    <experiments>3</experiments>
</comment>
<comment type="interaction">
    <interactant intactId="EBI-10172052">
        <id>P60411</id>
    </interactant>
    <interactant intactId="EBI-10281938">
        <id>Q9Y5A6</id>
        <label>ZSCAN21</label>
    </interactant>
    <organismsDiffer>false</organismsDiffer>
    <experiments>3</experiments>
</comment>
<comment type="interaction">
    <interactant intactId="EBI-10172052">
        <id>P60411</id>
    </interactant>
    <interactant intactId="EBI-3920053">
        <id>Q16670</id>
        <label>ZSCAN26</label>
    </interactant>
    <organismsDiffer>false</organismsDiffer>
    <experiments>3</experiments>
</comment>
<comment type="interaction">
    <interactant intactId="EBI-10172052">
        <id>P60411</id>
    </interactant>
    <interactant intactId="EBI-10174671">
        <id>A8K932</id>
    </interactant>
    <organismsDiffer>false</organismsDiffer>
    <experiments>3</experiments>
</comment>
<comment type="interaction">
    <interactant intactId="EBI-10172052">
        <id>P60411</id>
    </interactant>
    <interactant intactId="EBI-10248413">
        <id>Q5XG85</id>
    </interactant>
    <organismsDiffer>false</organismsDiffer>
    <experiments>3</experiments>
</comment>
<comment type="interaction">
    <interactant intactId="EBI-10172052">
        <id>P60411</id>
    </interactant>
    <interactant intactId="EBI-10307481">
        <id>Q9H6F0</id>
    </interactant>
    <organismsDiffer>false</organismsDiffer>
    <experiments>3</experiments>
</comment>
<comment type="interaction">
    <interactant intactId="EBI-10172052">
        <id>P60411</id>
    </interactant>
    <interactant intactId="EBI-10315054">
        <id>Q9NWL9</id>
    </interactant>
    <organismsDiffer>false</organismsDiffer>
    <experiments>3</experiments>
</comment>
<comment type="alternative products">
    <event type="alternative splicing"/>
    <isoform>
        <id>P60411-1</id>
        <name>1</name>
        <sequence type="displayed"/>
    </isoform>
    <text>A number of isoforms are produced.</text>
</comment>
<comment type="tissue specificity">
    <text evidence="1 2">Restricted to a narrow region of the hair fiber cuticle, lying approximately 20 cell layers above the apex of the dermal papilla of the hair root; not detected in any other tissues.</text>
</comment>
<comment type="similarity">
    <text evidence="4">Belongs to the KRTAP type 10 family.</text>
</comment>
<evidence type="ECO:0000269" key="1">
    <source>
    </source>
</evidence>
<evidence type="ECO:0000269" key="2">
    <source>
    </source>
</evidence>
<evidence type="ECO:0000269" key="3">
    <source>
    </source>
</evidence>
<evidence type="ECO:0000305" key="4"/>
<dbReference type="EMBL" id="AB076356">
    <property type="protein sequence ID" value="BAD01543.1"/>
    <property type="molecule type" value="mRNA"/>
</dbReference>
<dbReference type="EMBL" id="AL773602">
    <property type="status" value="NOT_ANNOTATED_CDS"/>
    <property type="molecule type" value="Genomic_DNA"/>
</dbReference>
<dbReference type="EMBL" id="CH471079">
    <property type="protein sequence ID" value="EAX09409.1"/>
    <property type="molecule type" value="Genomic_DNA"/>
</dbReference>
<dbReference type="EMBL" id="CH471079">
    <property type="protein sequence ID" value="EAX09411.1"/>
    <property type="molecule type" value="Genomic_DNA"/>
</dbReference>
<dbReference type="EMBL" id="BC131613">
    <property type="protein sequence ID" value="AAI31614.1"/>
    <property type="molecule type" value="mRNA"/>
</dbReference>
<dbReference type="EMBL" id="AJ566386">
    <property type="protein sequence ID" value="CAD97466.1"/>
    <property type="molecule type" value="mRNA"/>
</dbReference>
<dbReference type="CCDS" id="CCDS42961.1">
    <molecule id="P60411-1"/>
</dbReference>
<dbReference type="RefSeq" id="NP_941963.2">
    <molecule id="P60411-1"/>
    <property type="nucleotide sequence ID" value="NM_198690.3"/>
</dbReference>
<dbReference type="RefSeq" id="NP_941965.2">
    <property type="nucleotide sequence ID" value="NM_198692.2"/>
</dbReference>
<dbReference type="BioGRID" id="132127">
    <property type="interactions" value="241"/>
</dbReference>
<dbReference type="BioGRID" id="132129">
    <property type="interactions" value="63"/>
</dbReference>
<dbReference type="FunCoup" id="P60411">
    <property type="interactions" value="51"/>
</dbReference>
<dbReference type="IntAct" id="P60411">
    <property type="interactions" value="221"/>
</dbReference>
<dbReference type="STRING" id="9606.ENSP00000381009"/>
<dbReference type="MoonDB" id="P60411">
    <property type="type" value="Predicted"/>
</dbReference>
<dbReference type="iPTMnet" id="P60411"/>
<dbReference type="PhosphoSitePlus" id="P60411"/>
<dbReference type="BioMuta" id="KRTAP10-9"/>
<dbReference type="DMDM" id="294862449"/>
<dbReference type="MassIVE" id="P60411"/>
<dbReference type="PaxDb" id="9606-ENSP00000381009"/>
<dbReference type="PeptideAtlas" id="P60411"/>
<dbReference type="DNASU" id="386676"/>
<dbReference type="Ensembl" id="ENST00000397911.5">
    <molecule id="P60411-1"/>
    <property type="protein sequence ID" value="ENSP00000381009.3"/>
    <property type="gene ID" value="ENSG00000221837.7"/>
</dbReference>
<dbReference type="GeneID" id="386676"/>
<dbReference type="GeneID" id="386678"/>
<dbReference type="KEGG" id="hsa:386676"/>
<dbReference type="KEGG" id="hsa:386678"/>
<dbReference type="MANE-Select" id="ENST00000397911.5">
    <property type="protein sequence ID" value="ENSP00000381009.3"/>
    <property type="RefSeq nucleotide sequence ID" value="NM_198690.3"/>
    <property type="RefSeq protein sequence ID" value="NP_941963.2"/>
</dbReference>
<dbReference type="UCSC" id="uc002zfp.5">
    <molecule id="P60411-1"/>
    <property type="organism name" value="human"/>
</dbReference>
<dbReference type="AGR" id="HGNC:20528"/>
<dbReference type="AGR" id="HGNC:22971"/>
<dbReference type="CTD" id="386676"/>
<dbReference type="CTD" id="386678"/>
<dbReference type="GeneCards" id="KRTAP10-9"/>
<dbReference type="HGNC" id="HGNC:22971">
    <property type="gene designation" value="KRTAP10-9"/>
</dbReference>
<dbReference type="HPA" id="ENSG00000221837">
    <property type="expression patterns" value="Tissue enriched (skin)"/>
</dbReference>
<dbReference type="neXtProt" id="NX_P60411"/>
<dbReference type="PharmGKB" id="PA134873081"/>
<dbReference type="VEuPathDB" id="HostDB:ENSG00000221837"/>
<dbReference type="eggNOG" id="KOG4726">
    <property type="taxonomic scope" value="Eukaryota"/>
</dbReference>
<dbReference type="GeneTree" id="ENSGT00940000164049"/>
<dbReference type="InParanoid" id="P60411"/>
<dbReference type="OMA" id="RCDPPCR"/>
<dbReference type="OrthoDB" id="9635131at2759"/>
<dbReference type="PAN-GO" id="P60411">
    <property type="GO annotations" value="0 GO annotations based on evolutionary models"/>
</dbReference>
<dbReference type="PhylomeDB" id="P60411"/>
<dbReference type="TreeFam" id="TF351356"/>
<dbReference type="PathwayCommons" id="P60411"/>
<dbReference type="Reactome" id="R-HSA-6805567">
    <property type="pathway name" value="Keratinization"/>
</dbReference>
<dbReference type="SignaLink" id="P60411"/>
<dbReference type="BioGRID-ORCS" id="386676">
    <property type="hits" value="112 hits in 1089 CRISPR screens"/>
</dbReference>
<dbReference type="BioGRID-ORCS" id="386678">
    <property type="hits" value="18 hits in 1060 CRISPR screens"/>
</dbReference>
<dbReference type="Pharos" id="P60411">
    <property type="development level" value="Tdark"/>
</dbReference>
<dbReference type="PRO" id="PR:P60411"/>
<dbReference type="Proteomes" id="UP000005640">
    <property type="component" value="Chromosome 21"/>
</dbReference>
<dbReference type="RNAct" id="P60411">
    <property type="molecule type" value="protein"/>
</dbReference>
<dbReference type="Bgee" id="ENSG00000221837">
    <property type="expression patterns" value="Expressed in skin of abdomen and 3 other cell types or tissues"/>
</dbReference>
<dbReference type="ExpressionAtlas" id="P60411">
    <property type="expression patterns" value="baseline and differential"/>
</dbReference>
<dbReference type="GO" id="GO:0005829">
    <property type="term" value="C:cytosol"/>
    <property type="evidence" value="ECO:0000304"/>
    <property type="project" value="Reactome"/>
</dbReference>
<dbReference type="GO" id="GO:0045095">
    <property type="term" value="C:keratin filament"/>
    <property type="evidence" value="ECO:0007669"/>
    <property type="project" value="InterPro"/>
</dbReference>
<dbReference type="InterPro" id="IPR002494">
    <property type="entry name" value="KAP"/>
</dbReference>
<dbReference type="PANTHER" id="PTHR23262">
    <property type="entry name" value="KERATIN ASSOCIATED PROTEIN"/>
    <property type="match status" value="1"/>
</dbReference>
<dbReference type="PANTHER" id="PTHR23262:SF170">
    <property type="entry name" value="KERATIN-ASSOCIATED PROTEIN 10-9"/>
    <property type="match status" value="1"/>
</dbReference>
<dbReference type="Pfam" id="PF13885">
    <property type="entry name" value="Keratin_B2_2"/>
    <property type="match status" value="4"/>
</dbReference>
<gene>
    <name type="primary">KRTAP10-9</name>
    <name type="synonym">KAP10.9</name>
    <name type="synonym">KAP18-9</name>
    <name type="synonym">KRTAP10.9</name>
    <name type="synonym">KRTAP18-9</name>
    <name type="synonym">KRTAP18.9</name>
</gene>
<keyword id="KW-0025">Alternative splicing</keyword>
<keyword id="KW-0416">Keratin</keyword>
<keyword id="KW-1267">Proteomics identification</keyword>
<keyword id="KW-1185">Reference proteome</keyword>
<keyword id="KW-0677">Repeat</keyword>
<organism>
    <name type="scientific">Homo sapiens</name>
    <name type="common">Human</name>
    <dbReference type="NCBI Taxonomy" id="9606"/>
    <lineage>
        <taxon>Eukaryota</taxon>
        <taxon>Metazoa</taxon>
        <taxon>Chordata</taxon>
        <taxon>Craniata</taxon>
        <taxon>Vertebrata</taxon>
        <taxon>Euteleostomi</taxon>
        <taxon>Mammalia</taxon>
        <taxon>Eutheria</taxon>
        <taxon>Euarchontoglires</taxon>
        <taxon>Primates</taxon>
        <taxon>Haplorrhini</taxon>
        <taxon>Catarrhini</taxon>
        <taxon>Hominidae</taxon>
        <taxon>Homo</taxon>
    </lineage>
</organism>
<accession>P60411</accession>
<accession>A2RRG1</accession>
<accession>A6NIR9</accession>
<accession>Q70LJ1</accession>
<proteinExistence type="evidence at protein level"/>